<feature type="chain" id="PRO_1000142864" description="Large ribosomal subunit protein uL15">
    <location>
        <begin position="1"/>
        <end position="155"/>
    </location>
</feature>
<feature type="region of interest" description="Disordered" evidence="2">
    <location>
        <begin position="1"/>
        <end position="35"/>
    </location>
</feature>
<feature type="compositionally biased region" description="Basic residues" evidence="2">
    <location>
        <begin position="1"/>
        <end position="16"/>
    </location>
</feature>
<accession>A4WM07</accession>
<name>RL15_PYRAR</name>
<sequence>MVRRFKRAVKYRRGSRTHGWGRVGQHRKSGGSGGKGMVGFHKHKWSLVMKYGESGTGWPFYGKHGFKQPPTITVEWRPINVGTLAEVVRELKSEGKIREEGGKYVVNLLELGYNKLLGGGSIDVPVIVYTPVASKTAVEKIQRAGGEVRVVAIHR</sequence>
<protein>
    <recommendedName>
        <fullName evidence="1">Large ribosomal subunit protein uL15</fullName>
    </recommendedName>
    <alternativeName>
        <fullName evidence="3">50S ribosomal protein L15</fullName>
    </alternativeName>
</protein>
<evidence type="ECO:0000255" key="1">
    <source>
        <dbReference type="HAMAP-Rule" id="MF_01341"/>
    </source>
</evidence>
<evidence type="ECO:0000256" key="2">
    <source>
        <dbReference type="SAM" id="MobiDB-lite"/>
    </source>
</evidence>
<evidence type="ECO:0000305" key="3"/>
<reference key="1">
    <citation type="submission" date="2007-04" db="EMBL/GenBank/DDBJ databases">
        <title>Complete sequence of Pyrobaculum arsenaticum DSM 13514.</title>
        <authorList>
            <consortium name="US DOE Joint Genome Institute"/>
            <person name="Copeland A."/>
            <person name="Lucas S."/>
            <person name="Lapidus A."/>
            <person name="Barry K."/>
            <person name="Glavina del Rio T."/>
            <person name="Dalin E."/>
            <person name="Tice H."/>
            <person name="Pitluck S."/>
            <person name="Chain P."/>
            <person name="Malfatti S."/>
            <person name="Shin M."/>
            <person name="Vergez L."/>
            <person name="Schmutz J."/>
            <person name="Larimer F."/>
            <person name="Land M."/>
            <person name="Hauser L."/>
            <person name="Kyrpides N."/>
            <person name="Mikhailova N."/>
            <person name="Cozen A.E."/>
            <person name="Fitz-Gibbon S.T."/>
            <person name="House C.H."/>
            <person name="Saltikov C."/>
            <person name="Lowe T.M."/>
            <person name="Richardson P."/>
        </authorList>
    </citation>
    <scope>NUCLEOTIDE SEQUENCE [LARGE SCALE GENOMIC DNA]</scope>
    <source>
        <strain>ATCC 700994 / DSM 13514 / JCM 11321 / PZ6</strain>
    </source>
</reference>
<dbReference type="EMBL" id="CP000660">
    <property type="protein sequence ID" value="ABP51424.1"/>
    <property type="molecule type" value="Genomic_DNA"/>
</dbReference>
<dbReference type="RefSeq" id="WP_011901329.1">
    <property type="nucleotide sequence ID" value="NC_009376.1"/>
</dbReference>
<dbReference type="SMR" id="A4WM07"/>
<dbReference type="STRING" id="340102.Pars_1873"/>
<dbReference type="GeneID" id="5055751"/>
<dbReference type="KEGG" id="pas:Pars_1873"/>
<dbReference type="HOGENOM" id="CLU_109163_0_0_2"/>
<dbReference type="OrthoDB" id="9418at2157"/>
<dbReference type="PhylomeDB" id="A4WM07"/>
<dbReference type="Proteomes" id="UP000001567">
    <property type="component" value="Chromosome"/>
</dbReference>
<dbReference type="GO" id="GO:0022625">
    <property type="term" value="C:cytosolic large ribosomal subunit"/>
    <property type="evidence" value="ECO:0007669"/>
    <property type="project" value="TreeGrafter"/>
</dbReference>
<dbReference type="GO" id="GO:0019843">
    <property type="term" value="F:rRNA binding"/>
    <property type="evidence" value="ECO:0007669"/>
    <property type="project" value="UniProtKB-UniRule"/>
</dbReference>
<dbReference type="GO" id="GO:0003735">
    <property type="term" value="F:structural constituent of ribosome"/>
    <property type="evidence" value="ECO:0007669"/>
    <property type="project" value="InterPro"/>
</dbReference>
<dbReference type="GO" id="GO:0006412">
    <property type="term" value="P:translation"/>
    <property type="evidence" value="ECO:0007669"/>
    <property type="project" value="UniProtKB-UniRule"/>
</dbReference>
<dbReference type="FunFam" id="4.10.990.10:FF:000001">
    <property type="entry name" value="50S ribosomal protein L15"/>
    <property type="match status" value="1"/>
</dbReference>
<dbReference type="Gene3D" id="3.100.10.10">
    <property type="match status" value="1"/>
</dbReference>
<dbReference type="Gene3D" id="4.10.990.10">
    <property type="match status" value="1"/>
</dbReference>
<dbReference type="HAMAP" id="MF_01341">
    <property type="entry name" value="Ribosomal_uL15"/>
    <property type="match status" value="1"/>
</dbReference>
<dbReference type="InterPro" id="IPR027386">
    <property type="entry name" value="Rbsml_uL15_N"/>
</dbReference>
<dbReference type="InterPro" id="IPR030878">
    <property type="entry name" value="Ribosomal_uL15"/>
</dbReference>
<dbReference type="InterPro" id="IPR021131">
    <property type="entry name" value="Ribosomal_uL15/eL18"/>
</dbReference>
<dbReference type="InterPro" id="IPR036227">
    <property type="entry name" value="Ribosomal_uL15/eL18_sf"/>
</dbReference>
<dbReference type="InterPro" id="IPR001196">
    <property type="entry name" value="Ribosomal_uL15_CS"/>
</dbReference>
<dbReference type="PANTHER" id="PTHR11721">
    <property type="entry name" value="60S RIBOSOMAL PROTEIN L27A"/>
    <property type="match status" value="1"/>
</dbReference>
<dbReference type="PANTHER" id="PTHR11721:SF3">
    <property type="entry name" value="LARGE RIBOSOMAL SUBUNIT PROTEIN UL15"/>
    <property type="match status" value="1"/>
</dbReference>
<dbReference type="Pfam" id="PF00828">
    <property type="entry name" value="Ribosomal_L27A"/>
    <property type="match status" value="1"/>
</dbReference>
<dbReference type="SUPFAM" id="SSF52080">
    <property type="entry name" value="Ribosomal proteins L15p and L18e"/>
    <property type="match status" value="1"/>
</dbReference>
<dbReference type="PROSITE" id="PS00475">
    <property type="entry name" value="RIBOSOMAL_L15"/>
    <property type="match status" value="1"/>
</dbReference>
<keyword id="KW-0687">Ribonucleoprotein</keyword>
<keyword id="KW-0689">Ribosomal protein</keyword>
<keyword id="KW-0694">RNA-binding</keyword>
<keyword id="KW-0699">rRNA-binding</keyword>
<gene>
    <name evidence="1" type="primary">rpl15</name>
    <name type="ordered locus">Pars_1873</name>
</gene>
<comment type="function">
    <text evidence="1">Binds to the 23S rRNA.</text>
</comment>
<comment type="subunit">
    <text evidence="1">Part of the 50S ribosomal subunit.</text>
</comment>
<comment type="similarity">
    <text evidence="1">Belongs to the universal ribosomal protein uL15 family.</text>
</comment>
<proteinExistence type="inferred from homology"/>
<organism>
    <name type="scientific">Pyrobaculum arsenaticum (strain DSM 13514 / JCM 11321 / PZ6)</name>
    <dbReference type="NCBI Taxonomy" id="340102"/>
    <lineage>
        <taxon>Archaea</taxon>
        <taxon>Thermoproteota</taxon>
        <taxon>Thermoprotei</taxon>
        <taxon>Thermoproteales</taxon>
        <taxon>Thermoproteaceae</taxon>
        <taxon>Pyrobaculum</taxon>
    </lineage>
</organism>